<evidence type="ECO:0000250" key="1"/>
<evidence type="ECO:0000255" key="2">
    <source>
        <dbReference type="HAMAP-Rule" id="MF_00047"/>
    </source>
</evidence>
<comment type="function">
    <text evidence="2">Cell wall formation.</text>
</comment>
<comment type="catalytic activity">
    <reaction evidence="2">
        <text>2 D-alanine + ATP = D-alanyl-D-alanine + ADP + phosphate + H(+)</text>
        <dbReference type="Rhea" id="RHEA:11224"/>
        <dbReference type="ChEBI" id="CHEBI:15378"/>
        <dbReference type="ChEBI" id="CHEBI:30616"/>
        <dbReference type="ChEBI" id="CHEBI:43474"/>
        <dbReference type="ChEBI" id="CHEBI:57416"/>
        <dbReference type="ChEBI" id="CHEBI:57822"/>
        <dbReference type="ChEBI" id="CHEBI:456216"/>
        <dbReference type="EC" id="6.3.2.4"/>
    </reaction>
</comment>
<comment type="cofactor">
    <cofactor evidence="1">
        <name>Mg(2+)</name>
        <dbReference type="ChEBI" id="CHEBI:18420"/>
    </cofactor>
    <cofactor evidence="1">
        <name>Mn(2+)</name>
        <dbReference type="ChEBI" id="CHEBI:29035"/>
    </cofactor>
    <text evidence="1">Binds 2 magnesium or manganese ions per subunit.</text>
</comment>
<comment type="pathway">
    <text evidence="2">Cell wall biogenesis; peptidoglycan biosynthesis.</text>
</comment>
<comment type="subcellular location">
    <subcellularLocation>
        <location evidence="2">Cytoplasm</location>
    </subcellularLocation>
</comment>
<comment type="similarity">
    <text evidence="2">Belongs to the D-alanine--D-alanine ligase family.</text>
</comment>
<gene>
    <name evidence="2" type="primary">ddl</name>
    <name type="ordered locus">NGK_1820</name>
</gene>
<sequence>MQNFGKVAVLMGGFSSEREISLDSGTAILNALKSKGIDAYAFDPKETPLSELKERGFQTAFNILHGTYGEDGAVQGALELLGIPYTGSGVAASAIGMDKYRCKLIWQALGLPVPEFAVLYDDTDFDAVEEKLGLPMFVKPAAEGSSVGVVKVKEKGRLKSVYEELKHLQGEIIAERFIGGGEYSCPVLNGKGLPGIHIIPATEFYDYEAKYNRDDTIYQCPSEDLTEAEESLMRELAVRGAQAIGAEGCVRVDFLKDTDGKLYLLEINTLPGMTGHSLVPKSAAVTGVGFADLCIEILKAAHVG</sequence>
<reference key="1">
    <citation type="journal article" date="2008" name="J. Bacteriol.">
        <title>Complete genome sequence of Neisseria gonorrhoeae NCCP11945.</title>
        <authorList>
            <person name="Chung G.T."/>
            <person name="Yoo J.S."/>
            <person name="Oh H.B."/>
            <person name="Lee Y.S."/>
            <person name="Cha S.H."/>
            <person name="Kim S.J."/>
            <person name="Yoo C.K."/>
        </authorList>
    </citation>
    <scope>NUCLEOTIDE SEQUENCE [LARGE SCALE GENOMIC DNA]</scope>
    <source>
        <strain>NCCP11945</strain>
    </source>
</reference>
<keyword id="KW-0067">ATP-binding</keyword>
<keyword id="KW-0133">Cell shape</keyword>
<keyword id="KW-0961">Cell wall biogenesis/degradation</keyword>
<keyword id="KW-0963">Cytoplasm</keyword>
<keyword id="KW-0436">Ligase</keyword>
<keyword id="KW-0460">Magnesium</keyword>
<keyword id="KW-0464">Manganese</keyword>
<keyword id="KW-0479">Metal-binding</keyword>
<keyword id="KW-0547">Nucleotide-binding</keyword>
<keyword id="KW-0573">Peptidoglycan synthesis</keyword>
<organism>
    <name type="scientific">Neisseria gonorrhoeae (strain NCCP11945)</name>
    <dbReference type="NCBI Taxonomy" id="521006"/>
    <lineage>
        <taxon>Bacteria</taxon>
        <taxon>Pseudomonadati</taxon>
        <taxon>Pseudomonadota</taxon>
        <taxon>Betaproteobacteria</taxon>
        <taxon>Neisseriales</taxon>
        <taxon>Neisseriaceae</taxon>
        <taxon>Neisseria</taxon>
    </lineage>
</organism>
<proteinExistence type="inferred from homology"/>
<protein>
    <recommendedName>
        <fullName evidence="2">D-alanine--D-alanine ligase</fullName>
        <ecNumber evidence="2">6.3.2.4</ecNumber>
    </recommendedName>
    <alternativeName>
        <fullName evidence="2">D-Ala-D-Ala ligase</fullName>
    </alternativeName>
    <alternativeName>
        <fullName evidence="2">D-alanylalanine synthetase</fullName>
    </alternativeName>
</protein>
<feature type="chain" id="PRO_1000091197" description="D-alanine--D-alanine ligase">
    <location>
        <begin position="1"/>
        <end position="304"/>
    </location>
</feature>
<feature type="domain" description="ATP-grasp" evidence="2">
    <location>
        <begin position="103"/>
        <end position="299"/>
    </location>
</feature>
<feature type="binding site" evidence="2">
    <location>
        <begin position="129"/>
        <end position="184"/>
    </location>
    <ligand>
        <name>ATP</name>
        <dbReference type="ChEBI" id="CHEBI:30616"/>
    </ligand>
</feature>
<feature type="binding site" evidence="2">
    <location>
        <position position="253"/>
    </location>
    <ligand>
        <name>Mg(2+)</name>
        <dbReference type="ChEBI" id="CHEBI:18420"/>
        <label>1</label>
    </ligand>
</feature>
<feature type="binding site" evidence="2">
    <location>
        <position position="266"/>
    </location>
    <ligand>
        <name>Mg(2+)</name>
        <dbReference type="ChEBI" id="CHEBI:18420"/>
        <label>1</label>
    </ligand>
</feature>
<feature type="binding site" evidence="2">
    <location>
        <position position="266"/>
    </location>
    <ligand>
        <name>Mg(2+)</name>
        <dbReference type="ChEBI" id="CHEBI:18420"/>
        <label>2</label>
    </ligand>
</feature>
<feature type="binding site" evidence="2">
    <location>
        <position position="268"/>
    </location>
    <ligand>
        <name>Mg(2+)</name>
        <dbReference type="ChEBI" id="CHEBI:18420"/>
        <label>2</label>
    </ligand>
</feature>
<accession>B4RQC3</accession>
<name>DDL_NEIG2</name>
<dbReference type="EC" id="6.3.2.4" evidence="2"/>
<dbReference type="EMBL" id="CP001050">
    <property type="protein sequence ID" value="ACF30459.1"/>
    <property type="molecule type" value="Genomic_DNA"/>
</dbReference>
<dbReference type="RefSeq" id="WP_003689437.1">
    <property type="nucleotide sequence ID" value="NC_011035.1"/>
</dbReference>
<dbReference type="SMR" id="B4RQC3"/>
<dbReference type="KEGG" id="ngk:NGK_1820"/>
<dbReference type="HOGENOM" id="CLU_039268_1_2_4"/>
<dbReference type="UniPathway" id="UPA00219"/>
<dbReference type="Proteomes" id="UP000002564">
    <property type="component" value="Chromosome"/>
</dbReference>
<dbReference type="GO" id="GO:0005737">
    <property type="term" value="C:cytoplasm"/>
    <property type="evidence" value="ECO:0007669"/>
    <property type="project" value="UniProtKB-SubCell"/>
</dbReference>
<dbReference type="GO" id="GO:0005524">
    <property type="term" value="F:ATP binding"/>
    <property type="evidence" value="ECO:0007669"/>
    <property type="project" value="UniProtKB-KW"/>
</dbReference>
<dbReference type="GO" id="GO:0008716">
    <property type="term" value="F:D-alanine-D-alanine ligase activity"/>
    <property type="evidence" value="ECO:0007669"/>
    <property type="project" value="UniProtKB-UniRule"/>
</dbReference>
<dbReference type="GO" id="GO:0046872">
    <property type="term" value="F:metal ion binding"/>
    <property type="evidence" value="ECO:0007669"/>
    <property type="project" value="UniProtKB-KW"/>
</dbReference>
<dbReference type="GO" id="GO:0071555">
    <property type="term" value="P:cell wall organization"/>
    <property type="evidence" value="ECO:0007669"/>
    <property type="project" value="UniProtKB-KW"/>
</dbReference>
<dbReference type="GO" id="GO:0009252">
    <property type="term" value="P:peptidoglycan biosynthetic process"/>
    <property type="evidence" value="ECO:0007669"/>
    <property type="project" value="UniProtKB-UniRule"/>
</dbReference>
<dbReference type="GO" id="GO:0008360">
    <property type="term" value="P:regulation of cell shape"/>
    <property type="evidence" value="ECO:0007669"/>
    <property type="project" value="UniProtKB-KW"/>
</dbReference>
<dbReference type="FunFam" id="3.30.1490.20:FF:000023">
    <property type="entry name" value="D-alanine--D-alanine ligase"/>
    <property type="match status" value="1"/>
</dbReference>
<dbReference type="FunFam" id="3.30.470.20:FF:000008">
    <property type="entry name" value="D-alanine--D-alanine ligase"/>
    <property type="match status" value="1"/>
</dbReference>
<dbReference type="FunFam" id="3.40.50.20:FF:000013">
    <property type="entry name" value="D-alanine--D-alanine ligase"/>
    <property type="match status" value="1"/>
</dbReference>
<dbReference type="Gene3D" id="3.40.50.20">
    <property type="match status" value="1"/>
</dbReference>
<dbReference type="Gene3D" id="3.30.1490.20">
    <property type="entry name" value="ATP-grasp fold, A domain"/>
    <property type="match status" value="1"/>
</dbReference>
<dbReference type="Gene3D" id="3.30.470.20">
    <property type="entry name" value="ATP-grasp fold, B domain"/>
    <property type="match status" value="1"/>
</dbReference>
<dbReference type="HAMAP" id="MF_00047">
    <property type="entry name" value="Dala_Dala_lig"/>
    <property type="match status" value="1"/>
</dbReference>
<dbReference type="InterPro" id="IPR011761">
    <property type="entry name" value="ATP-grasp"/>
</dbReference>
<dbReference type="InterPro" id="IPR013815">
    <property type="entry name" value="ATP_grasp_subdomain_1"/>
</dbReference>
<dbReference type="InterPro" id="IPR000291">
    <property type="entry name" value="D-Ala_lig_Van_CS"/>
</dbReference>
<dbReference type="InterPro" id="IPR005905">
    <property type="entry name" value="D_ala_D_ala"/>
</dbReference>
<dbReference type="InterPro" id="IPR011095">
    <property type="entry name" value="Dala_Dala_lig_C"/>
</dbReference>
<dbReference type="InterPro" id="IPR011127">
    <property type="entry name" value="Dala_Dala_lig_N"/>
</dbReference>
<dbReference type="InterPro" id="IPR016185">
    <property type="entry name" value="PreATP-grasp_dom_sf"/>
</dbReference>
<dbReference type="NCBIfam" id="TIGR01205">
    <property type="entry name" value="D_ala_D_alaTIGR"/>
    <property type="match status" value="1"/>
</dbReference>
<dbReference type="NCBIfam" id="NF002378">
    <property type="entry name" value="PRK01372.1"/>
    <property type="match status" value="1"/>
</dbReference>
<dbReference type="PANTHER" id="PTHR23132">
    <property type="entry name" value="D-ALANINE--D-ALANINE LIGASE"/>
    <property type="match status" value="1"/>
</dbReference>
<dbReference type="PANTHER" id="PTHR23132:SF23">
    <property type="entry name" value="D-ALANINE--D-ALANINE LIGASE B"/>
    <property type="match status" value="1"/>
</dbReference>
<dbReference type="Pfam" id="PF07478">
    <property type="entry name" value="Dala_Dala_lig_C"/>
    <property type="match status" value="1"/>
</dbReference>
<dbReference type="Pfam" id="PF01820">
    <property type="entry name" value="Dala_Dala_lig_N"/>
    <property type="match status" value="1"/>
</dbReference>
<dbReference type="PIRSF" id="PIRSF039102">
    <property type="entry name" value="Ddl/VanB"/>
    <property type="match status" value="1"/>
</dbReference>
<dbReference type="SUPFAM" id="SSF56059">
    <property type="entry name" value="Glutathione synthetase ATP-binding domain-like"/>
    <property type="match status" value="1"/>
</dbReference>
<dbReference type="SUPFAM" id="SSF52440">
    <property type="entry name" value="PreATP-grasp domain"/>
    <property type="match status" value="1"/>
</dbReference>
<dbReference type="PROSITE" id="PS50975">
    <property type="entry name" value="ATP_GRASP"/>
    <property type="match status" value="1"/>
</dbReference>
<dbReference type="PROSITE" id="PS00843">
    <property type="entry name" value="DALA_DALA_LIGASE_1"/>
    <property type="match status" value="1"/>
</dbReference>
<dbReference type="PROSITE" id="PS00844">
    <property type="entry name" value="DALA_DALA_LIGASE_2"/>
    <property type="match status" value="1"/>
</dbReference>